<proteinExistence type="inferred from homology"/>
<protein>
    <recommendedName>
        <fullName evidence="2">Type IV pilus biogenesis factor PilY1</fullName>
    </recommendedName>
    <alternativeName>
        <fullName evidence="6">Pilus-associated adhesin PilY1</fullName>
    </alternativeName>
</protein>
<gene>
    <name evidence="9 10" type="primary">pilY1</name>
    <name evidence="10" type="ordered locus">PA4554</name>
</gene>
<accession>Q9HVM8</accession>
<accession>Q51536</accession>
<organism evidence="10">
    <name type="scientific">Pseudomonas aeruginosa (strain ATCC 15692 / DSM 22644 / CIP 104116 / JCM 14847 / LMG 12228 / 1C / PRS 101 / PAO1)</name>
    <dbReference type="NCBI Taxonomy" id="208964"/>
    <lineage>
        <taxon>Bacteria</taxon>
        <taxon>Pseudomonadati</taxon>
        <taxon>Pseudomonadota</taxon>
        <taxon>Gammaproteobacteria</taxon>
        <taxon>Pseudomonadales</taxon>
        <taxon>Pseudomonadaceae</taxon>
        <taxon>Pseudomonas</taxon>
    </lineage>
</organism>
<comment type="function">
    <text evidence="2 5">Involved in pilus assembly, twitching motility and adhesion to host cells. Primes type IV pili (T4P) assembly and is required for inclusion of minor pilins PilV, PilW and PilX to the surface pili (PubMed:25389296). Stabilizes assembled pilus fibers likely by antagonizing retraction mediated by PilT. Calcium-binding and calcium release by PilY1 seem to be essential for twitching motility and for regulation of pilus retraction dynamics of PilT (By similarity).</text>
</comment>
<comment type="subunit">
    <text evidence="2">Interacts (via C-terminus) with host integrins alpha-V/beta-3 (ITGAV/ITGB3) and alpha-V/beta-5 (ITGAV/ITGB5).</text>
</comment>
<comment type="subcellular location">
    <subcellularLocation>
        <location evidence="2">Fimbrium</location>
    </subcellularLocation>
    <subcellularLocation>
        <location evidence="2">Membrane</location>
    </subcellularLocation>
    <subcellularLocation>
        <location evidence="1">Cytoplasm</location>
        <location evidence="1">Cytosol</location>
    </subcellularLocation>
    <text evidence="2 5">Colocalizes with the T4P fraction when surface pili are present (By similarity). Sheared surface fraction when PilV, PilW and PilX are also present (PubMed:25389296).</text>
</comment>
<comment type="disruption phenotype">
    <text evidence="5">Pilus assembly severely impaired. Retraction-deficient. Prevents incorporation of PilE into pili.</text>
</comment>
<comment type="miscellaneous">
    <text evidence="2">Residues 598-606 comprise a calcium-binding site which together with the other one (residues 849-857) seems important for interaction with integrins of the host.</text>
</comment>
<comment type="similarity">
    <text evidence="8">Belongs to the PilY1 family.</text>
</comment>
<comment type="sequence caution" evidence="8">
    <conflict type="erroneous initiation">
        <sequence resource="EMBL-CDS" id="AAA93502"/>
    </conflict>
    <text>Extended N-terminus.</text>
</comment>
<comment type="sequence caution" evidence="8">
    <conflict type="frameshift">
        <sequence resource="EMBL-CDS" id="AAA93502"/>
    </conflict>
</comment>
<name>PILY1_PSEAE</name>
<feature type="signal peptide" evidence="3">
    <location>
        <begin position="1"/>
        <end position="30"/>
    </location>
</feature>
<feature type="chain" id="PRO_0000431916" description="Type IV pilus biogenesis factor PilY1" evidence="3">
    <location>
        <begin position="31"/>
        <end position="1161"/>
    </location>
</feature>
<feature type="region of interest" description="Integrin-binding motif RGD" evidence="2">
    <location>
        <begin position="617"/>
        <end position="619"/>
    </location>
</feature>
<feature type="region of interest" description="Disordered" evidence="4">
    <location>
        <begin position="1136"/>
        <end position="1161"/>
    </location>
</feature>
<feature type="binding site" evidence="2">
    <location>
        <position position="598"/>
    </location>
    <ligand>
        <name>Ca(2+)</name>
        <dbReference type="ChEBI" id="CHEBI:29108"/>
        <label>1</label>
    </ligand>
</feature>
<feature type="binding site" evidence="2">
    <location>
        <position position="600"/>
    </location>
    <ligand>
        <name>Ca(2+)</name>
        <dbReference type="ChEBI" id="CHEBI:29108"/>
        <label>1</label>
    </ligand>
</feature>
<feature type="binding site" evidence="2">
    <location>
        <position position="602"/>
    </location>
    <ligand>
        <name>Ca(2+)</name>
        <dbReference type="ChEBI" id="CHEBI:29108"/>
        <label>1</label>
    </ligand>
</feature>
<feature type="binding site" evidence="2">
    <location>
        <position position="606"/>
    </location>
    <ligand>
        <name>Ca(2+)</name>
        <dbReference type="ChEBI" id="CHEBI:29108"/>
        <label>1</label>
    </ligand>
</feature>
<feature type="binding site" evidence="2">
    <location>
        <position position="849"/>
    </location>
    <ligand>
        <name>Ca(2+)</name>
        <dbReference type="ChEBI" id="CHEBI:29108"/>
        <label>2</label>
    </ligand>
</feature>
<feature type="binding site" evidence="2">
    <location>
        <position position="851"/>
    </location>
    <ligand>
        <name>Ca(2+)</name>
        <dbReference type="ChEBI" id="CHEBI:29108"/>
        <label>2</label>
    </ligand>
</feature>
<feature type="binding site" evidence="2">
    <location>
        <position position="853"/>
    </location>
    <ligand>
        <name>Ca(2+)</name>
        <dbReference type="ChEBI" id="CHEBI:29108"/>
        <label>2</label>
    </ligand>
</feature>
<feature type="binding site" evidence="2">
    <location>
        <position position="855"/>
    </location>
    <ligand>
        <name>Ca(2+)</name>
        <dbReference type="ChEBI" id="CHEBI:29108"/>
        <label>2</label>
    </ligand>
</feature>
<feature type="binding site" evidence="2">
    <location>
        <position position="857"/>
    </location>
    <ligand>
        <name>Ca(2+)</name>
        <dbReference type="ChEBI" id="CHEBI:29108"/>
        <label>2</label>
    </ligand>
</feature>
<feature type="sequence conflict" description="In Ref. 1; AAA93502." evidence="8" ref="1">
    <original>S</original>
    <variation>R</variation>
    <location>
        <position position="128"/>
    </location>
</feature>
<feature type="sequence conflict" description="In Ref. 1; AAA93502." evidence="8" ref="1">
    <original>C</original>
    <variation>W</variation>
    <location>
        <position position="169"/>
    </location>
</feature>
<feature type="sequence conflict" description="In Ref. 1; AAA93502." evidence="8" ref="1">
    <original>A</original>
    <variation>R</variation>
    <location>
        <position position="203"/>
    </location>
</feature>
<feature type="sequence conflict" description="In Ref. 1; AAA93502." evidence="8" ref="1">
    <original>YS</original>
    <variation>FR</variation>
    <location>
        <begin position="213"/>
        <end position="214"/>
    </location>
</feature>
<feature type="sequence conflict" description="In Ref. 1; AAA93502." evidence="8" ref="1">
    <original>S</original>
    <variation>G</variation>
    <location>
        <position position="239"/>
    </location>
</feature>
<feature type="sequence conflict" description="In Ref. 1; AAA93502." evidence="8" ref="1">
    <original>H</original>
    <variation>Q</variation>
    <location>
        <position position="255"/>
    </location>
</feature>
<feature type="sequence conflict" description="In Ref. 1; AAA93502." evidence="8" ref="1">
    <original>P</original>
    <variation>H</variation>
    <location>
        <position position="273"/>
    </location>
</feature>
<feature type="sequence conflict" description="In Ref. 1; AAA93502." evidence="8" ref="1">
    <original>A</original>
    <variation>G</variation>
    <location>
        <position position="281"/>
    </location>
</feature>
<feature type="sequence conflict" description="In Ref. 1; AAA93502." evidence="8" ref="1">
    <original>A</original>
    <variation>D</variation>
    <location>
        <position position="388"/>
    </location>
</feature>
<feature type="sequence conflict" description="In Ref. 1; AAA93502." evidence="8" ref="1">
    <original>A</original>
    <variation>G</variation>
    <location>
        <position position="392"/>
    </location>
</feature>
<feature type="sequence conflict" description="In Ref. 1; AAA93502." evidence="8" ref="1">
    <original>T</original>
    <variation>I</variation>
    <location>
        <position position="403"/>
    </location>
</feature>
<feature type="sequence conflict" description="In Ref. 1; AAA93502." evidence="8" ref="1">
    <original>T</original>
    <variation>N</variation>
    <location>
        <position position="417"/>
    </location>
</feature>
<feature type="sequence conflict" description="In Ref. 1; AAA93502." evidence="8" ref="1">
    <original>K</original>
    <variation>N</variation>
    <location>
        <position position="549"/>
    </location>
</feature>
<feature type="sequence conflict" description="In Ref. 1; AAA93502." evidence="8" ref="1">
    <original>Q</original>
    <variation>K</variation>
    <location>
        <position position="594"/>
    </location>
</feature>
<feature type="sequence conflict" description="In Ref. 1; AAA93502." evidence="8" ref="1">
    <original>P</original>
    <variation>L</variation>
    <location>
        <position position="845"/>
    </location>
</feature>
<feature type="sequence conflict" description="In Ref. 1; AAA93502." evidence="8" ref="1">
    <original>A</original>
    <variation>T</variation>
    <location>
        <position position="892"/>
    </location>
</feature>
<feature type="sequence conflict" description="In Ref. 1; AAA93502." evidence="8" ref="1">
    <original>A</original>
    <variation>G</variation>
    <location>
        <position position="1006"/>
    </location>
</feature>
<feature type="sequence conflict" description="In Ref. 1; AAA93502." evidence="8" ref="1">
    <original>S</original>
    <variation>R</variation>
    <location>
        <position position="1083"/>
    </location>
</feature>
<feature type="sequence conflict" description="In Ref. 1; AAA93502." evidence="8" ref="1">
    <original>A</original>
    <variation>G</variation>
    <location>
        <position position="1090"/>
    </location>
</feature>
<feature type="sequence conflict" description="In Ref. 1; AAA93502." evidence="8" ref="1">
    <original>S</original>
    <variation>R</variation>
    <location>
        <position position="1102"/>
    </location>
</feature>
<feature type="sequence conflict" description="In Ref. 1; AAA93502." evidence="8" ref="1">
    <original>Q</original>
    <variation>R</variation>
    <location>
        <position position="1106"/>
    </location>
</feature>
<feature type="sequence conflict" description="In Ref. 1; AAA93502." evidence="8" ref="1">
    <original>AV</original>
    <variation>GN</variation>
    <location>
        <begin position="1109"/>
        <end position="1110"/>
    </location>
</feature>
<feature type="sequence conflict" description="In Ref. 1; AAA93502." evidence="8" ref="1">
    <original>G</original>
    <variation>A</variation>
    <location>
        <position position="1129"/>
    </location>
</feature>
<keyword id="KW-0106">Calcium</keyword>
<keyword id="KW-0963">Cytoplasm</keyword>
<keyword id="KW-0281">Fimbrium</keyword>
<keyword id="KW-1029">Fimbrium biogenesis</keyword>
<keyword id="KW-0472">Membrane</keyword>
<keyword id="KW-0479">Metal-binding</keyword>
<keyword id="KW-1185">Reference proteome</keyword>
<keyword id="KW-0732">Signal</keyword>
<evidence type="ECO:0000250" key="1">
    <source>
        <dbReference type="UniProtKB" id="Q02GC2"/>
    </source>
</evidence>
<evidence type="ECO:0000250" key="2">
    <source>
        <dbReference type="UniProtKB" id="S0HPF7"/>
    </source>
</evidence>
<evidence type="ECO:0000255" key="3"/>
<evidence type="ECO:0000256" key="4">
    <source>
        <dbReference type="SAM" id="MobiDB-lite"/>
    </source>
</evidence>
<evidence type="ECO:0000269" key="5">
    <source>
    </source>
</evidence>
<evidence type="ECO:0000303" key="6">
    <source>
    </source>
</evidence>
<evidence type="ECO:0000303" key="7">
    <source>
    </source>
</evidence>
<evidence type="ECO:0000305" key="8"/>
<evidence type="ECO:0000312" key="9">
    <source>
        <dbReference type="EMBL" id="AAA93502.1"/>
    </source>
</evidence>
<evidence type="ECO:0000312" key="10">
    <source>
        <dbReference type="EMBL" id="AAG07942.1"/>
    </source>
</evidence>
<evidence type="ECO:0000312" key="11">
    <source>
        <dbReference type="PIR" id="S72645"/>
    </source>
</evidence>
<evidence type="ECO:0000312" key="12">
    <source>
        <dbReference type="Proteomes" id="UP000002438"/>
    </source>
</evidence>
<dbReference type="EMBL" id="L76605">
    <property type="protein sequence ID" value="AAA93502.1"/>
    <property type="status" value="ALT_SEQ"/>
    <property type="molecule type" value="Genomic_DNA"/>
</dbReference>
<dbReference type="EMBL" id="AE004091">
    <property type="protein sequence ID" value="AAG07942.1"/>
    <property type="molecule type" value="Genomic_DNA"/>
</dbReference>
<dbReference type="PIR" id="D83076">
    <property type="entry name" value="D83076"/>
</dbReference>
<dbReference type="PIR" id="S72645">
    <property type="entry name" value="S72645"/>
</dbReference>
<dbReference type="RefSeq" id="NP_253244.1">
    <property type="nucleotide sequence ID" value="NC_002516.2"/>
</dbReference>
<dbReference type="RefSeq" id="WP_003115287.1">
    <property type="nucleotide sequence ID" value="NZ_QZGE01000004.1"/>
</dbReference>
<dbReference type="SMR" id="Q9HVM8"/>
<dbReference type="STRING" id="208964.PA4554"/>
<dbReference type="TCDB" id="9.A.21.1.2">
    <property type="family name" value="the comc dna uptake competence (comc) family"/>
</dbReference>
<dbReference type="PaxDb" id="208964-PA4554"/>
<dbReference type="GeneID" id="877859"/>
<dbReference type="KEGG" id="pae:PA4554"/>
<dbReference type="PATRIC" id="fig|208964.12.peg.4766"/>
<dbReference type="PseudoCAP" id="PA4554"/>
<dbReference type="HOGENOM" id="CLU_001890_1_1_6"/>
<dbReference type="InParanoid" id="Q9HVM8"/>
<dbReference type="OrthoDB" id="7156875at2"/>
<dbReference type="PhylomeDB" id="Q9HVM8"/>
<dbReference type="BioCyc" id="PAER208964:G1FZ6-4647-MONOMER"/>
<dbReference type="EvolutionaryTrace" id="Q9HVM8"/>
<dbReference type="PHI-base" id="PHI:8162"/>
<dbReference type="Proteomes" id="UP000002438">
    <property type="component" value="Chromosome"/>
</dbReference>
<dbReference type="GO" id="GO:0005829">
    <property type="term" value="C:cytosol"/>
    <property type="evidence" value="ECO:0007669"/>
    <property type="project" value="UniProtKB-SubCell"/>
</dbReference>
<dbReference type="GO" id="GO:0016020">
    <property type="term" value="C:membrane"/>
    <property type="evidence" value="ECO:0007669"/>
    <property type="project" value="UniProtKB-SubCell"/>
</dbReference>
<dbReference type="GO" id="GO:0009289">
    <property type="term" value="C:pilus"/>
    <property type="evidence" value="ECO:0007669"/>
    <property type="project" value="UniProtKB-SubCell"/>
</dbReference>
<dbReference type="GO" id="GO:0005509">
    <property type="term" value="F:calcium ion binding"/>
    <property type="evidence" value="ECO:0000250"/>
    <property type="project" value="UniProtKB"/>
</dbReference>
<dbReference type="GO" id="GO:0043107">
    <property type="term" value="P:type IV pilus-dependent motility"/>
    <property type="evidence" value="ECO:0000315"/>
    <property type="project" value="PseudoCAP"/>
</dbReference>
<dbReference type="InterPro" id="IPR008707">
    <property type="entry name" value="PilY1_beta_prop_dom"/>
</dbReference>
<dbReference type="InterPro" id="IPR011047">
    <property type="entry name" value="Quinoprotein_ADH-like_sf"/>
</dbReference>
<dbReference type="Pfam" id="PF05567">
    <property type="entry name" value="T4P_PilY1"/>
    <property type="match status" value="1"/>
</dbReference>
<dbReference type="SUPFAM" id="SSF50998">
    <property type="entry name" value="Quinoprotein alcohol dehydrogenase-like"/>
    <property type="match status" value="1"/>
</dbReference>
<sequence>MKSVLHQIGKTSLAAALSGAVLLSAQTTHAAALSVSQQPLMLIQGVAPNMLVTLDDSGSMAFAYAPDSISGYGNYTFFASNSFNPMYFDPNTQYKLPKKLTLVNGQVQIQDYPAPNFSSAWRNGFTRSGSINLSNSYKVTIEYGRGYDKESTIKADAAYYYDFTGSSSCNRTNQACYTRRYVSTEQRQNFANWYSFYRTRALATQTAANLAFYSLPENARVSWQLLNDSNCNQMGSGSSSGNCFSNYLRDFTGQHRVNFFNWLEKLSVNGGTPLRQAMTRAGEFLKKTGVNGPYAYRPGTQTAPEYSCRGSYHILMTDGLWNNDSANVGNADSTARNLPDGKSYSSQTPYRDGTFDTLADQAFHYWATDARPDIDDNIKPYIPYPDQANPSAEYWNPRNDPATWQHMVTYTLGLGLTTSLTSPRWEGSTFSGGYNDIVAGNLSWPRASNNDSNNVYDLWHAAVNSRGEFFSADSPDQLVAAFQDILNRISGKDLPASRPAISSSLQEDDTGDKLTRFAYQTSFASDKNWAGDLTRYSLTTQDKATVQTKLWSAQSILDAMPNGGAGRKIMMAGSGTSGLKEFTWGSLSADQQRQLNRDPDRNDVADTKGQDRVAFLRGDRRKENSDNFRTRNSILGDIINSSPATVGKAQYLTYLAQPIEPSGNYSTFAEAQKTRAPRVYVGANDGMLHGFDTDGNETFAFIPSAVFEKLHKLTARGYQGGAHQFYVDGSPVVADAFFGGAWHTVLIGSLRAGGKGLFALDVTDPANIKLLWEIGVDQEPDLGYSFPKPTVARLHNGKWAVVTGNGYSSLNDKAALLIIDLETGAITRKLEVTGRTGVPNGLSSPRLADNNSDGVADYAYAGDLQGNLWRFDLIAGKVNQDDPFSRANDGPAVASSFRVSFGGQPLYSAVDSAGAAQAITAAPSLVRHPTRKGYIVIFGTGKYFENADARADTSRAQTLYGIWDQQTKGEAAGSTPRLTRGNLQQQTLDLQADSTFASTARTIRIASQNPVNWLNNDGSTKQSGWYLDFMVNGTLKGEMLIEDMIAIGQVVLLQTITPNDDPCADGASNWTYGLDPYTGGRTSFTVFDLARQGVVDSKSDYSYNKQNVAVSGTEQKGLGGLTLSTNEQGNPEVCSSGECLTVNPGPNTRGRQNWRPIEGKN</sequence>
<reference evidence="11" key="1">
    <citation type="journal article" date="1996" name="Mol. Microbiol.">
        <title>Fimbrial biogenesis genes of Pseudomonas aeruginosa: pilW and pilX increase the similarity of type 4 fimbriae to the GSP protein-secretion systems and pilY1 encodes a gonococcal PilC homologue.</title>
        <authorList>
            <person name="Alm R.A."/>
            <person name="Hallinan J.P."/>
            <person name="Watson A.A."/>
            <person name="Mattick J.S."/>
        </authorList>
    </citation>
    <scope>NUCLEOTIDE SEQUENCE [GENOMIC DNA]</scope>
    <source>
        <strain evidence="7">ATCC 15692 / DSM 22644 / CIP 104116 / JCM 14847 / LMG 12228 / 1C / PRS 101 / PAO1</strain>
    </source>
</reference>
<reference evidence="10 12" key="2">
    <citation type="journal article" date="2000" name="Nature">
        <title>Complete genome sequence of Pseudomonas aeruginosa PAO1, an opportunistic pathogen.</title>
        <authorList>
            <person name="Stover C.K."/>
            <person name="Pham X.-Q.T."/>
            <person name="Erwin A.L."/>
            <person name="Mizoguchi S.D."/>
            <person name="Warrener P."/>
            <person name="Hickey M.J."/>
            <person name="Brinkman F.S.L."/>
            <person name="Hufnagle W.O."/>
            <person name="Kowalik D.J."/>
            <person name="Lagrou M."/>
            <person name="Garber R.L."/>
            <person name="Goltry L."/>
            <person name="Tolentino E."/>
            <person name="Westbrock-Wadman S."/>
            <person name="Yuan Y."/>
            <person name="Brody L.L."/>
            <person name="Coulter S.N."/>
            <person name="Folger K.R."/>
            <person name="Kas A."/>
            <person name="Larbig K."/>
            <person name="Lim R.M."/>
            <person name="Smith K.A."/>
            <person name="Spencer D.H."/>
            <person name="Wong G.K.-S."/>
            <person name="Wu Z."/>
            <person name="Paulsen I.T."/>
            <person name="Reizer J."/>
            <person name="Saier M.H. Jr."/>
            <person name="Hancock R.E.W."/>
            <person name="Lory S."/>
            <person name="Olson M.V."/>
        </authorList>
    </citation>
    <scope>NUCLEOTIDE SEQUENCE [LARGE SCALE GENOMIC DNA]</scope>
    <source>
        <strain evidence="12">ATCC 15692 / DSM 22644 / CIP 104116 / JCM 14847 / LMG 12228 / 1C / PRS 101 / PAO1</strain>
    </source>
</reference>
<reference key="3">
    <citation type="journal article" date="2015" name="J. Biol. Chem.">
        <title>Pseudomonas aeruginosa minor pilins prime type IVa pilus assembly and promote surface display of the PilY1 adhesin.</title>
        <authorList>
            <person name="Nguyen Y."/>
            <person name="Sugiman-Marangos S."/>
            <person name="Harvey H."/>
            <person name="Bell S.D."/>
            <person name="Charlton C.L."/>
            <person name="Junop M.S."/>
            <person name="Burrows L.L."/>
        </authorList>
    </citation>
    <scope>FUNCTION</scope>
    <scope>SUBCELLULAR LOCATION</scope>
    <scope>DISRUPTION PHENOTYPE</scope>
    <source>
        <strain>ATCC 15692 / DSM 22644 / CIP 104116 / JCM 14847 / LMG 12228 / 1C / PRS 101 / PAO1</strain>
    </source>
</reference>